<organism>
    <name type="scientific">Sus scrofa</name>
    <name type="common">Pig</name>
    <dbReference type="NCBI Taxonomy" id="9823"/>
    <lineage>
        <taxon>Eukaryota</taxon>
        <taxon>Metazoa</taxon>
        <taxon>Chordata</taxon>
        <taxon>Craniata</taxon>
        <taxon>Vertebrata</taxon>
        <taxon>Euteleostomi</taxon>
        <taxon>Mammalia</taxon>
        <taxon>Eutheria</taxon>
        <taxon>Laurasiatheria</taxon>
        <taxon>Artiodactyla</taxon>
        <taxon>Suina</taxon>
        <taxon>Suidae</taxon>
        <taxon>Sus</taxon>
    </lineage>
</organism>
<gene>
    <name type="primary">CCNG1</name>
</gene>
<feature type="chain" id="PRO_0000292656" description="Cyclin-G1">
    <location>
        <begin position="1"/>
        <end position="295"/>
    </location>
</feature>
<reference key="1">
    <citation type="submission" date="2005-03" db="EMBL/GenBank/DDBJ databases">
        <title>Molecular cloning and characterization of porcine CCNG1.</title>
        <authorList>
            <person name="Xu D.Q."/>
            <person name="Xiong Y.Z."/>
            <person name="Liu M."/>
        </authorList>
    </citation>
    <scope>NUCLEOTIDE SEQUENCE [MRNA]</scope>
    <source>
        <tissue>Skeletal muscle</tissue>
    </source>
</reference>
<name>CCNG1_PIG</name>
<keyword id="KW-0131">Cell cycle</keyword>
<keyword id="KW-0132">Cell division</keyword>
<keyword id="KW-0195">Cyclin</keyword>
<keyword id="KW-0498">Mitosis</keyword>
<keyword id="KW-0539">Nucleus</keyword>
<keyword id="KW-1185">Reference proteome</keyword>
<proteinExistence type="evidence at transcript level"/>
<accession>Q52QT8</accession>
<dbReference type="EMBL" id="AY974246">
    <property type="protein sequence ID" value="AAX84681.1"/>
    <property type="molecule type" value="mRNA"/>
</dbReference>
<dbReference type="RefSeq" id="NP_001026951.1">
    <property type="nucleotide sequence ID" value="NM_001031781.2"/>
</dbReference>
<dbReference type="SMR" id="Q52QT8"/>
<dbReference type="FunCoup" id="Q52QT8">
    <property type="interactions" value="430"/>
</dbReference>
<dbReference type="IntAct" id="Q52QT8">
    <property type="interactions" value="1"/>
</dbReference>
<dbReference type="STRING" id="9823.ENSSSCP00000018036"/>
<dbReference type="PaxDb" id="9823-ENSSSCP00000018036"/>
<dbReference type="Ensembl" id="ENSSSCT00000018536.5">
    <property type="protein sequence ID" value="ENSSSCP00000018036.4"/>
    <property type="gene ID" value="ENSSSCG00000017024.5"/>
</dbReference>
<dbReference type="Ensembl" id="ENSSSCT00015013429.1">
    <property type="protein sequence ID" value="ENSSSCP00015005194.1"/>
    <property type="gene ID" value="ENSSSCG00015010126.1"/>
</dbReference>
<dbReference type="Ensembl" id="ENSSSCT00025042033.1">
    <property type="protein sequence ID" value="ENSSSCP00025017891.1"/>
    <property type="gene ID" value="ENSSSCG00025030659.1"/>
</dbReference>
<dbReference type="Ensembl" id="ENSSSCT00030084818.1">
    <property type="protein sequence ID" value="ENSSSCP00030039054.1"/>
    <property type="gene ID" value="ENSSSCG00030060617.1"/>
</dbReference>
<dbReference type="Ensembl" id="ENSSSCT00035063959.1">
    <property type="protein sequence ID" value="ENSSSCP00035025894.1"/>
    <property type="gene ID" value="ENSSSCG00035047997.1"/>
</dbReference>
<dbReference type="Ensembl" id="ENSSSCT00040085558.1">
    <property type="protein sequence ID" value="ENSSSCP00040037440.1"/>
    <property type="gene ID" value="ENSSSCG00040062448.1"/>
</dbReference>
<dbReference type="Ensembl" id="ENSSSCT00045046642.1">
    <property type="protein sequence ID" value="ENSSSCP00045032372.1"/>
    <property type="gene ID" value="ENSSSCG00045027306.1"/>
</dbReference>
<dbReference type="Ensembl" id="ENSSSCT00050051912.1">
    <property type="protein sequence ID" value="ENSSSCP00050021805.1"/>
    <property type="gene ID" value="ENSSSCG00050038477.1"/>
</dbReference>
<dbReference type="Ensembl" id="ENSSSCT00055010025.1">
    <property type="protein sequence ID" value="ENSSSCP00055007924.1"/>
    <property type="gene ID" value="ENSSSCG00055005093.1"/>
</dbReference>
<dbReference type="Ensembl" id="ENSSSCT00060057552.1">
    <property type="protein sequence ID" value="ENSSSCP00060024620.1"/>
    <property type="gene ID" value="ENSSSCG00060042428.1"/>
</dbReference>
<dbReference type="Ensembl" id="ENSSSCT00065105619.1">
    <property type="protein sequence ID" value="ENSSSCP00065046879.1"/>
    <property type="gene ID" value="ENSSSCG00065076429.1"/>
</dbReference>
<dbReference type="Ensembl" id="ENSSSCT00070027020.1">
    <property type="protein sequence ID" value="ENSSSCP00070022463.1"/>
    <property type="gene ID" value="ENSSSCG00070013834.1"/>
</dbReference>
<dbReference type="Ensembl" id="ENSSSCT00070027029.1">
    <property type="protein sequence ID" value="ENSSSCP00070022472.1"/>
    <property type="gene ID" value="ENSSSCG00070013834.1"/>
</dbReference>
<dbReference type="Ensembl" id="ENSSSCT00090004762">
    <property type="protein sequence ID" value="ENSSSCP00090002870"/>
    <property type="gene ID" value="ENSSSCG00090002785"/>
</dbReference>
<dbReference type="Ensembl" id="ENSSSCT00105031338">
    <property type="protein sequence ID" value="ENSSSCP00105021896"/>
    <property type="gene ID" value="ENSSSCG00105016296"/>
</dbReference>
<dbReference type="Ensembl" id="ENSSSCT00110069762">
    <property type="protein sequence ID" value="ENSSSCP00110049073"/>
    <property type="gene ID" value="ENSSSCG00110036704"/>
</dbReference>
<dbReference type="Ensembl" id="ENSSSCT00115010785">
    <property type="protein sequence ID" value="ENSSSCP00115010167"/>
    <property type="gene ID" value="ENSSSCG00115006209"/>
</dbReference>
<dbReference type="Ensembl" id="ENSSSCT00130008359">
    <property type="protein sequence ID" value="ENSSSCP00130005650"/>
    <property type="gene ID" value="ENSSSCG00130004480"/>
</dbReference>
<dbReference type="GeneID" id="595110"/>
<dbReference type="KEGG" id="ssc:595110"/>
<dbReference type="CTD" id="900"/>
<dbReference type="VGNC" id="VGNC:86357">
    <property type="gene designation" value="CCNG1"/>
</dbReference>
<dbReference type="eggNOG" id="KOG0653">
    <property type="taxonomic scope" value="Eukaryota"/>
</dbReference>
<dbReference type="GeneTree" id="ENSGT00940000154726"/>
<dbReference type="HOGENOM" id="CLU_062642_0_0_1"/>
<dbReference type="InParanoid" id="Q52QT8"/>
<dbReference type="OMA" id="CFEAQEE"/>
<dbReference type="OrthoDB" id="769138at2759"/>
<dbReference type="TreeFam" id="TF101007"/>
<dbReference type="Reactome" id="R-SSC-6804757">
    <property type="pathway name" value="Regulation of TP53 Degradation"/>
</dbReference>
<dbReference type="Proteomes" id="UP000008227">
    <property type="component" value="Chromosome 16"/>
</dbReference>
<dbReference type="Proteomes" id="UP000314985">
    <property type="component" value="Chromosome 16"/>
</dbReference>
<dbReference type="Proteomes" id="UP000694570">
    <property type="component" value="Unplaced"/>
</dbReference>
<dbReference type="Proteomes" id="UP000694571">
    <property type="component" value="Unplaced"/>
</dbReference>
<dbReference type="Proteomes" id="UP000694720">
    <property type="component" value="Unplaced"/>
</dbReference>
<dbReference type="Proteomes" id="UP000694722">
    <property type="component" value="Unplaced"/>
</dbReference>
<dbReference type="Proteomes" id="UP000694723">
    <property type="component" value="Unplaced"/>
</dbReference>
<dbReference type="Proteomes" id="UP000694724">
    <property type="component" value="Unplaced"/>
</dbReference>
<dbReference type="Proteomes" id="UP000694725">
    <property type="component" value="Unplaced"/>
</dbReference>
<dbReference type="Proteomes" id="UP000694726">
    <property type="component" value="Unplaced"/>
</dbReference>
<dbReference type="Proteomes" id="UP000694727">
    <property type="component" value="Unplaced"/>
</dbReference>
<dbReference type="Proteomes" id="UP000694728">
    <property type="component" value="Unplaced"/>
</dbReference>
<dbReference type="GO" id="GO:0005634">
    <property type="term" value="C:nucleus"/>
    <property type="evidence" value="ECO:0007669"/>
    <property type="project" value="UniProtKB-SubCell"/>
</dbReference>
<dbReference type="GO" id="GO:0051301">
    <property type="term" value="P:cell division"/>
    <property type="evidence" value="ECO:0007669"/>
    <property type="project" value="UniProtKB-KW"/>
</dbReference>
<dbReference type="CDD" id="cd20583">
    <property type="entry name" value="CYCLIN_CCNG1"/>
    <property type="match status" value="1"/>
</dbReference>
<dbReference type="FunFam" id="1.10.472.10:FF:000006">
    <property type="entry name" value="Cyclin I"/>
    <property type="match status" value="1"/>
</dbReference>
<dbReference type="Gene3D" id="1.10.472.10">
    <property type="entry name" value="Cyclin-like"/>
    <property type="match status" value="2"/>
</dbReference>
<dbReference type="InterPro" id="IPR039361">
    <property type="entry name" value="Cyclin"/>
</dbReference>
<dbReference type="InterPro" id="IPR013763">
    <property type="entry name" value="Cyclin-like_dom"/>
</dbReference>
<dbReference type="InterPro" id="IPR036915">
    <property type="entry name" value="Cyclin-like_sf"/>
</dbReference>
<dbReference type="InterPro" id="IPR006671">
    <property type="entry name" value="Cyclin_N"/>
</dbReference>
<dbReference type="PANTHER" id="PTHR10177">
    <property type="entry name" value="CYCLINS"/>
    <property type="match status" value="1"/>
</dbReference>
<dbReference type="Pfam" id="PF00134">
    <property type="entry name" value="Cyclin_N"/>
    <property type="match status" value="1"/>
</dbReference>
<dbReference type="SMART" id="SM00385">
    <property type="entry name" value="CYCLIN"/>
    <property type="match status" value="1"/>
</dbReference>
<dbReference type="SUPFAM" id="SSF47954">
    <property type="entry name" value="Cyclin-like"/>
    <property type="match status" value="1"/>
</dbReference>
<comment type="function">
    <text evidence="1">May play a role in growth regulation. Is associated with G2/M phase arrest in response to DNA damage. May be an intermediate by which p53 mediates its role as an inhibitor of cellular proliferation (By similarity).</text>
</comment>
<comment type="subcellular location">
    <subcellularLocation>
        <location evidence="1">Nucleus</location>
    </subcellularLocation>
</comment>
<comment type="similarity">
    <text evidence="2">Belongs to the cyclin family. Cyclin G subfamily.</text>
</comment>
<protein>
    <recommendedName>
        <fullName>Cyclin-G1</fullName>
    </recommendedName>
</protein>
<evidence type="ECO:0000250" key="1"/>
<evidence type="ECO:0000305" key="2"/>
<sequence>MIEVPTTTDSQKLLHQLNALLEQESRCQPKVCGLRLIESAHDNGLRMTARLRDFEVKDLLSLTQFFGFDTETFSLAVNLLDRFLSKMKVQPKHLGCVGLSCFYLAVKSLEEERNVPLATDLIRISQYRFTVSDLMRMEKIVLEKVCWKVKATTAFQFLQLYYSLLQESLPYERRNSLNFERLEAQLKACYCRIIFSKAKPSVLALSIIALEIQALKCVELAEGAECLQKHSKINGRDLTFWQELVSKCLTEYSSNKCSKPNVQKLKWIVSGRTARQLKHSYYRITHLPTIPEMVP</sequence>